<dbReference type="EMBL" id="X67914">
    <property type="protein sequence ID" value="CAA48113.1"/>
    <property type="molecule type" value="mRNA"/>
</dbReference>
<dbReference type="CCDS" id="CCDS15200.1"/>
<dbReference type="PIR" id="S28029">
    <property type="entry name" value="S28029"/>
</dbReference>
<dbReference type="RefSeq" id="NP_032824.1">
    <property type="nucleotide sequence ID" value="NM_008798.3"/>
</dbReference>
<dbReference type="PDB" id="1NPU">
    <property type="method" value="X-ray"/>
    <property type="resolution" value="2.00 A"/>
    <property type="chains" value="A=34-150"/>
</dbReference>
<dbReference type="PDB" id="3BIK">
    <property type="method" value="X-ray"/>
    <property type="resolution" value="2.65 A"/>
    <property type="chains" value="B/C=25-157"/>
</dbReference>
<dbReference type="PDB" id="3BP5">
    <property type="method" value="X-ray"/>
    <property type="resolution" value="1.80 A"/>
    <property type="chains" value="A=34-150"/>
</dbReference>
<dbReference type="PDB" id="3BP6">
    <property type="method" value="X-ray"/>
    <property type="resolution" value="1.60 A"/>
    <property type="chains" value="A=34-150"/>
</dbReference>
<dbReference type="PDB" id="3RNK">
    <property type="method" value="X-ray"/>
    <property type="resolution" value="1.74 A"/>
    <property type="chains" value="A=34-150"/>
</dbReference>
<dbReference type="PDB" id="3RNQ">
    <property type="method" value="X-ray"/>
    <property type="resolution" value="1.60 A"/>
    <property type="chains" value="A=34-150"/>
</dbReference>
<dbReference type="PDB" id="3SBW">
    <property type="method" value="X-ray"/>
    <property type="resolution" value="2.28 A"/>
    <property type="chains" value="A/B=34-150"/>
</dbReference>
<dbReference type="PDBsum" id="1NPU"/>
<dbReference type="PDBsum" id="3BIK"/>
<dbReference type="PDBsum" id="3BP5"/>
<dbReference type="PDBsum" id="3BP6"/>
<dbReference type="PDBsum" id="3RNK"/>
<dbReference type="PDBsum" id="3RNQ"/>
<dbReference type="PDBsum" id="3SBW"/>
<dbReference type="SMR" id="Q02242"/>
<dbReference type="BioGRID" id="202068">
    <property type="interactions" value="2"/>
</dbReference>
<dbReference type="DIP" id="DIP-29730N"/>
<dbReference type="FunCoup" id="Q02242">
    <property type="interactions" value="1024"/>
</dbReference>
<dbReference type="IntAct" id="Q02242">
    <property type="interactions" value="4"/>
</dbReference>
<dbReference type="STRING" id="10090.ENSMUSP00000027507"/>
<dbReference type="BindingDB" id="Q02242"/>
<dbReference type="ChEMBL" id="CHEMBL4630756"/>
<dbReference type="GlyCosmos" id="Q02242">
    <property type="glycosylation" value="4 sites, No reported glycans"/>
</dbReference>
<dbReference type="GlyGen" id="Q02242">
    <property type="glycosylation" value="7 sites"/>
</dbReference>
<dbReference type="iPTMnet" id="Q02242"/>
<dbReference type="PhosphoSitePlus" id="Q02242"/>
<dbReference type="SwissPalm" id="Q02242"/>
<dbReference type="PaxDb" id="10090-ENSMUSP00000027507"/>
<dbReference type="ProteomicsDB" id="287899"/>
<dbReference type="ABCD" id="Q02242">
    <property type="antibodies" value="7 sequenced antibodies"/>
</dbReference>
<dbReference type="Antibodypedia" id="20331">
    <property type="antibodies" value="3382 antibodies from 54 providers"/>
</dbReference>
<dbReference type="DNASU" id="18566"/>
<dbReference type="Ensembl" id="ENSMUST00000027507.9">
    <property type="protein sequence ID" value="ENSMUSP00000027507.7"/>
    <property type="gene ID" value="ENSMUSG00000026285.9"/>
</dbReference>
<dbReference type="GeneID" id="18566"/>
<dbReference type="KEGG" id="mmu:18566"/>
<dbReference type="UCSC" id="uc007cev.1">
    <property type="organism name" value="mouse"/>
</dbReference>
<dbReference type="AGR" id="MGI:104879"/>
<dbReference type="CTD" id="5133"/>
<dbReference type="MGI" id="MGI:104879">
    <property type="gene designation" value="Pdcd1"/>
</dbReference>
<dbReference type="VEuPathDB" id="HostDB:ENSMUSG00000026285"/>
<dbReference type="eggNOG" id="ENOG502SUIW">
    <property type="taxonomic scope" value="Eukaryota"/>
</dbReference>
<dbReference type="GeneTree" id="ENSGT00390000013662"/>
<dbReference type="HOGENOM" id="CLU_1075828_0_0_1"/>
<dbReference type="InParanoid" id="Q02242"/>
<dbReference type="OMA" id="CVHTEYA"/>
<dbReference type="OrthoDB" id="9940233at2759"/>
<dbReference type="PhylomeDB" id="Q02242"/>
<dbReference type="TreeFam" id="TF336181"/>
<dbReference type="Reactome" id="R-MMU-389948">
    <property type="pathway name" value="Co-inhibition by PD-1"/>
</dbReference>
<dbReference type="BioGRID-ORCS" id="18566">
    <property type="hits" value="4 hits in 81 CRISPR screens"/>
</dbReference>
<dbReference type="EvolutionaryTrace" id="Q02242"/>
<dbReference type="PRO" id="PR:Q02242"/>
<dbReference type="Proteomes" id="UP000000589">
    <property type="component" value="Chromosome 1"/>
</dbReference>
<dbReference type="RNAct" id="Q02242">
    <property type="molecule type" value="protein"/>
</dbReference>
<dbReference type="Bgee" id="ENSMUSG00000026285">
    <property type="expression patterns" value="Expressed in mesodermal cell in embryo and 25 other cell types or tissues"/>
</dbReference>
<dbReference type="ExpressionAtlas" id="Q02242">
    <property type="expression patterns" value="baseline and differential"/>
</dbReference>
<dbReference type="GO" id="GO:0009897">
    <property type="term" value="C:external side of plasma membrane"/>
    <property type="evidence" value="ECO:0000314"/>
    <property type="project" value="MGI"/>
</dbReference>
<dbReference type="GO" id="GO:0038023">
    <property type="term" value="F:signaling receptor activity"/>
    <property type="evidence" value="ECO:0000250"/>
    <property type="project" value="UniProtKB"/>
</dbReference>
<dbReference type="GO" id="GO:0002250">
    <property type="term" value="P:adaptive immune response"/>
    <property type="evidence" value="ECO:0007669"/>
    <property type="project" value="UniProtKB-KW"/>
</dbReference>
<dbReference type="GO" id="GO:0001783">
    <property type="term" value="P:B cell apoptotic process"/>
    <property type="evidence" value="ECO:0000315"/>
    <property type="project" value="MGI"/>
</dbReference>
<dbReference type="GO" id="GO:0002903">
    <property type="term" value="P:negative regulation of B cell apoptotic process"/>
    <property type="evidence" value="ECO:0000315"/>
    <property type="project" value="MGI"/>
</dbReference>
<dbReference type="GO" id="GO:0050777">
    <property type="term" value="P:negative regulation of immune response"/>
    <property type="evidence" value="ECO:0000315"/>
    <property type="project" value="UniProtKB"/>
</dbReference>
<dbReference type="GO" id="GO:0050868">
    <property type="term" value="P:negative regulation of T cell activation"/>
    <property type="evidence" value="ECO:0000250"/>
    <property type="project" value="UniProtKB"/>
</dbReference>
<dbReference type="GO" id="GO:0002841">
    <property type="term" value="P:negative regulation of T cell mediated immune response to tumor cell"/>
    <property type="evidence" value="ECO:0007669"/>
    <property type="project" value="Ensembl"/>
</dbReference>
<dbReference type="GO" id="GO:0002644">
    <property type="term" value="P:negative regulation of tolerance induction"/>
    <property type="evidence" value="ECO:0000315"/>
    <property type="project" value="MGI"/>
</dbReference>
<dbReference type="GO" id="GO:0070234">
    <property type="term" value="P:positive regulation of T cell apoptotic process"/>
    <property type="evidence" value="ECO:0000315"/>
    <property type="project" value="MGI"/>
</dbReference>
<dbReference type="GO" id="GO:1902482">
    <property type="term" value="P:regulatory T cell apoptotic process"/>
    <property type="evidence" value="ECO:0000315"/>
    <property type="project" value="MGI"/>
</dbReference>
<dbReference type="CDD" id="cd16088">
    <property type="entry name" value="IgV_PD1"/>
    <property type="match status" value="1"/>
</dbReference>
<dbReference type="FunFam" id="2.60.40.10:FF:001952">
    <property type="entry name" value="Programmed cell death protein 1"/>
    <property type="match status" value="1"/>
</dbReference>
<dbReference type="Gene3D" id="2.60.40.10">
    <property type="entry name" value="Immunoglobulins"/>
    <property type="match status" value="1"/>
</dbReference>
<dbReference type="InterPro" id="IPR007110">
    <property type="entry name" value="Ig-like_dom"/>
</dbReference>
<dbReference type="InterPro" id="IPR036179">
    <property type="entry name" value="Ig-like_dom_sf"/>
</dbReference>
<dbReference type="InterPro" id="IPR013783">
    <property type="entry name" value="Ig-like_fold"/>
</dbReference>
<dbReference type="InterPro" id="IPR003599">
    <property type="entry name" value="Ig_sub"/>
</dbReference>
<dbReference type="InterPro" id="IPR013106">
    <property type="entry name" value="Ig_V-set"/>
</dbReference>
<dbReference type="InterPro" id="IPR042379">
    <property type="entry name" value="PDCD1"/>
</dbReference>
<dbReference type="PANTHER" id="PTHR15264">
    <property type="entry name" value="PROGRAMMED CELL DEATH PROTEIN 1"/>
    <property type="match status" value="1"/>
</dbReference>
<dbReference type="PANTHER" id="PTHR15264:SF2">
    <property type="entry name" value="PROGRAMMED CELL DEATH PROTEIN 1"/>
    <property type="match status" value="1"/>
</dbReference>
<dbReference type="Pfam" id="PF07686">
    <property type="entry name" value="V-set"/>
    <property type="match status" value="1"/>
</dbReference>
<dbReference type="SMART" id="SM00409">
    <property type="entry name" value="IG"/>
    <property type="match status" value="1"/>
</dbReference>
<dbReference type="SUPFAM" id="SSF48726">
    <property type="entry name" value="Immunoglobulin"/>
    <property type="match status" value="1"/>
</dbReference>
<dbReference type="PROSITE" id="PS50835">
    <property type="entry name" value="IG_LIKE"/>
    <property type="match status" value="1"/>
</dbReference>
<feature type="signal peptide" evidence="2">
    <location>
        <begin position="1"/>
        <end position="24"/>
    </location>
</feature>
<feature type="chain" id="PRO_0000014893" description="Programmed cell death protein 1">
    <location>
        <begin position="25"/>
        <end position="288"/>
    </location>
</feature>
<feature type="topological domain" description="Extracellular" evidence="2">
    <location>
        <begin position="25"/>
        <end position="169"/>
    </location>
</feature>
<feature type="transmembrane region" description="Helical" evidence="2">
    <location>
        <begin position="170"/>
        <end position="190"/>
    </location>
</feature>
<feature type="topological domain" description="Cytoplasmic" evidence="2">
    <location>
        <begin position="191"/>
        <end position="288"/>
    </location>
</feature>
<feature type="domain" description="Ig-like V-type" evidence="3">
    <location>
        <begin position="31"/>
        <end position="139"/>
    </location>
</feature>
<feature type="region of interest" description="Interaction with CD274/PDCD1L1" evidence="1">
    <location>
        <begin position="70"/>
        <end position="77"/>
    </location>
</feature>
<feature type="region of interest" description="Disordered" evidence="4">
    <location>
        <begin position="263"/>
        <end position="288"/>
    </location>
</feature>
<feature type="short sequence motif" description="ITIM motif" evidence="9 15">
    <location>
        <begin position="223"/>
        <end position="228"/>
    </location>
</feature>
<feature type="short sequence motif" description="ITSM motif" evidence="15">
    <location>
        <begin position="247"/>
        <end position="251"/>
    </location>
</feature>
<feature type="compositionally biased region" description="Basic and acidic residues" evidence="4">
    <location>
        <begin position="277"/>
        <end position="288"/>
    </location>
</feature>
<feature type="modified residue" description="Phosphotyrosine" evidence="9">
    <location>
        <position position="225"/>
    </location>
</feature>
<feature type="modified residue" description="Phosphothreonine; by MAPK3" evidence="1">
    <location>
        <position position="236"/>
    </location>
</feature>
<feature type="modified residue" description="Phosphotyrosine" evidence="9">
    <location>
        <position position="248"/>
    </location>
</feature>
<feature type="glycosylation site" description="N-linked (GlcNAc...) asparagine" evidence="2">
    <location>
        <position position="49"/>
    </location>
</feature>
<feature type="glycosylation site" description="N-linked (GlcNAc...) asparagine" evidence="2">
    <location>
        <position position="58"/>
    </location>
</feature>
<feature type="glycosylation site" description="N-linked (GlcNAc...) asparagine" evidence="2">
    <location>
        <position position="74"/>
    </location>
</feature>
<feature type="glycosylation site" description="N-linked (GlcNAc...) asparagine" evidence="2">
    <location>
        <position position="116"/>
    </location>
</feature>
<feature type="disulfide bond" evidence="3 11 12 13">
    <location>
        <begin position="54"/>
        <end position="123"/>
    </location>
</feature>
<feature type="cross-link" description="Glycyl lysine isopeptide (Lys-Gly) (interchain with G-Cter in ubiquitin)" evidence="1">
    <location>
        <position position="235"/>
    </location>
</feature>
<feature type="mutagenesis site" description="Reduced tyrosine phosphorylation. Decreased ability to mediate recruitment of PTPN11/SHP-2." evidence="9 15">
    <original>Y</original>
    <variation>F</variation>
    <location>
        <position position="225"/>
    </location>
</feature>
<feature type="mutagenesis site" description="Reduced tyrosine phosphorylation. Abolished ability to mediate recruitment of PTPN11/SHP-2." evidence="9 15">
    <original>Y</original>
    <variation>F</variation>
    <location>
        <position position="248"/>
    </location>
</feature>
<feature type="strand" evidence="20">
    <location>
        <begin position="35"/>
        <end position="38"/>
    </location>
</feature>
<feature type="strand" evidence="20">
    <location>
        <begin position="40"/>
        <end position="45"/>
    </location>
</feature>
<feature type="strand" evidence="20">
    <location>
        <begin position="50"/>
        <end position="58"/>
    </location>
</feature>
<feature type="strand" evidence="20">
    <location>
        <begin position="64"/>
        <end position="70"/>
    </location>
</feature>
<feature type="strand" evidence="20">
    <location>
        <begin position="76"/>
        <end position="83"/>
    </location>
</feature>
<feature type="strand" evidence="20">
    <location>
        <begin position="86"/>
        <end position="91"/>
    </location>
</feature>
<feature type="strand" evidence="20">
    <location>
        <begin position="95"/>
        <end position="99"/>
    </location>
</feature>
<feature type="strand" evidence="20">
    <location>
        <begin position="103"/>
        <end position="112"/>
    </location>
</feature>
<feature type="helix" evidence="20">
    <location>
        <begin position="115"/>
        <end position="117"/>
    </location>
</feature>
<feature type="strand" evidence="20">
    <location>
        <begin position="119"/>
        <end position="127"/>
    </location>
</feature>
<feature type="strand" evidence="20">
    <location>
        <begin position="129"/>
        <end position="131"/>
    </location>
</feature>
<feature type="strand" evidence="20">
    <location>
        <begin position="133"/>
        <end position="136"/>
    </location>
</feature>
<feature type="strand" evidence="20">
    <location>
        <begin position="140"/>
        <end position="145"/>
    </location>
</feature>
<comment type="function">
    <text evidence="1 5 6 7 8 9 12 13 14 15">Inhibitory receptor on antigen activated T-cells that plays a critical role in induction and maintenance of immune tolerance to self (PubMed:10485649, PubMed:11209085, PubMed:11698646, PubMed:21300912). Delivers inhibitory signals upon binding to ligands, such as CD274/PDCD1L1 and CD273/PDCD1LG2 (PubMed:11015443, PubMed:11224527, PubMed:18287011, PubMed:18641123, PubMed:22641383). Following T-cell receptor (TCR) engagement, PDCD1 associates with CD3-TCR in the immunological synapse and directly inhibits T-cell activation (PubMed:22641383). Suppresses T-cell activation through the recruitment of PTPN11/SHP-2: following ligand-binding, PDCD1 is phosphorylated within the ITSM motif, leading to the recruitment of the protein tyrosine phosphatase PTPN11/SHP-2 that mediates dephosphorylation of key TCR proximal signaling molecules, such as ZAP70, PRKCQ/PKCtheta and CD247/CD3zeta (PubMed:11698646, PubMed:22641383). The PDCD1-mediated inhibitory pathway is exploited by tumors to attenuate anti-tumor immunity and facilitate tumor survival (By similarity).</text>
</comment>
<comment type="subunit">
    <text evidence="1 11 12 13">Monomer (PubMed:15030777, PubMed:18287011, PubMed:18641123). Interacts with CD274/PDCD1L1 (PubMed:18287011). Interacts with CD273/PDCD1LG2 (PubMed:18641123). Interacts with FBXO38; leading to ubiquitination and degradation by the proteasome (By similarity).</text>
</comment>
<comment type="interaction">
    <interactant intactId="EBI-5258903">
        <id>Q02242</id>
    </interactant>
    <interactant intactId="EBI-5258879">
        <id>Q9EP73</id>
        <label>Cd274</label>
    </interactant>
    <organismsDiffer>false</organismsDiffer>
    <experiments>3</experiments>
</comment>
<comment type="interaction">
    <interactant intactId="EBI-5258903">
        <id>Q02242</id>
    </interactant>
    <interactant intactId="EBI-15716794">
        <id>Q9WUL5</id>
        <label>Pdcd1lg2</label>
    </interactant>
    <organismsDiffer>false</organismsDiffer>
    <experiments>2</experiments>
</comment>
<comment type="subcellular location">
    <subcellularLocation>
        <location evidence="15 16">Cell membrane</location>
        <topology>Single-pass type I membrane protein</topology>
    </subcellularLocation>
</comment>
<comment type="tissue specificity">
    <text evidence="10">Thymus-specific.</text>
</comment>
<comment type="developmental stage">
    <text evidence="10">Induced at programmed cell death.</text>
</comment>
<comment type="PTM">
    <text evidence="1">Ubiquitinated at Lys-235 by the SCF(FBXO38) complex, leading to its proteasomal degradation. Ubiquitinated via 'Lys-48'-linked polyubiquitin chains. Deubiquitinated and thus stabilized by USP5.</text>
</comment>
<comment type="PTM">
    <text evidence="1 9 15">Tyrosine phosphorylated at Tyr-225 (within ITIM motif) and Tyr-248 (ITSM motif) upon ligand binding (PubMed:11698646, PubMed:22641383). Phosphorylation at Tyr-248 promotes the recruitment of the protein tyrosine phosphatase PTPN11/SHP-2 that mediates dephosphorylation of key TCR proximal signaling molecules, such as ZAP70, PRKCQ/PKCtheta and CD247/CD3zeta (PubMed:22641383). Phosphorylation at Thr-236 promotes the recruitment of the deubiquitinase USP5 (By similarity).</text>
</comment>
<comment type="disruption phenotype">
    <text evidence="5 7 14 17">Mice grow and develop normally but exhibit splenomegaly, selective augmentation of IgG3 antibody response to a T-independent type II antigen, and enhanced proliferative responses of B-cells and myeloid cells by anti-IgM and granulocyte colony-stimulating factor stimulation (PubMed:9796923). Mice are prone to development of autoimmune diseases (PubMed:10485649, PubMed:11209085). In a C57BL/6J background, mice spontaneously develop lupus-like autoimmune phenotypes, characterized by proliferative arthritis and glomerulonephritis with predominant IgG3 deposition (PubMed:10485649). In a BALB/c background, mice develop autoimmune dilated cardiomyopathy with severely impaired contraction, and two-third of mice die by congestive heart failure before 30 weeks of age (PubMed:11209085). Mice lacking both Lag3 and Pdcd1/PD-1 die of severe myocarditis before 10 weeks of age in BALB/c mice (PubMed:21300912).</text>
</comment>
<name>PDCD1_MOUSE</name>
<keyword id="KW-0002">3D-structure</keyword>
<keyword id="KW-1064">Adaptive immunity</keyword>
<keyword id="KW-0053">Apoptosis</keyword>
<keyword id="KW-1003">Cell membrane</keyword>
<keyword id="KW-1015">Disulfide bond</keyword>
<keyword id="KW-0325">Glycoprotein</keyword>
<keyword id="KW-0391">Immunity</keyword>
<keyword id="KW-0393">Immunoglobulin domain</keyword>
<keyword id="KW-1017">Isopeptide bond</keyword>
<keyword id="KW-0472">Membrane</keyword>
<keyword id="KW-0597">Phosphoprotein</keyword>
<keyword id="KW-1185">Reference proteome</keyword>
<keyword id="KW-0732">Signal</keyword>
<keyword id="KW-0812">Transmembrane</keyword>
<keyword id="KW-1133">Transmembrane helix</keyword>
<keyword id="KW-0832">Ubl conjugation</keyword>
<protein>
    <recommendedName>
        <fullName evidence="18">Programmed cell death protein 1</fullName>
        <shortName evidence="18">Protein PD-1</shortName>
        <shortName>mPD-1</shortName>
    </recommendedName>
    <cdAntigenName>CD279</cdAntigenName>
</protein>
<reference key="1">
    <citation type="journal article" date="1992" name="EMBO J.">
        <title>Induced expression of PD-1, a novel member of the immunoglobulin gene superfamily, upon programmed cell death.</title>
        <authorList>
            <person name="Ishida Y."/>
            <person name="Agata Y."/>
            <person name="Shibahara K."/>
            <person name="Honjo T."/>
        </authorList>
    </citation>
    <scope>NUCLEOTIDE SEQUENCE [MRNA]</scope>
    <scope>TISSUE SPECIFICITY</scope>
    <scope>DEVELOPMENTAL STAGE</scope>
</reference>
<reference key="2">
    <citation type="journal article" date="1998" name="Int. Immunol.">
        <title>Immunological studies on PD-1 deficient mice: implication of PD-1 as a negative regulator for B cell responses.</title>
        <authorList>
            <person name="Nishimura H."/>
            <person name="Minato N."/>
            <person name="Nakano T."/>
            <person name="Honjo T."/>
        </authorList>
    </citation>
    <scope>DISRUPTION PHENOTYPE</scope>
</reference>
<reference key="3">
    <citation type="journal article" date="1999" name="Immunity">
        <title>Development of lupus-like autoimmune diseases by disruption of the PD-1 gene encoding an ITIM motif-carrying immunoreceptor.</title>
        <authorList>
            <person name="Nishimura H."/>
            <person name="Nose M."/>
            <person name="Hiai H."/>
            <person name="Minato N."/>
            <person name="Honjo T."/>
        </authorList>
    </citation>
    <scope>FUNCTION</scope>
    <scope>DISRUPTION PHENOTYPE</scope>
</reference>
<reference key="4">
    <citation type="journal article" date="2000" name="J. Exp. Med.">
        <title>Engagement of the PD-1 immunoinhibitory receptor by a novel B7-family member leads to negative regulation of lymphocyte activation.</title>
        <authorList>
            <person name="Freeman G.J."/>
            <person name="Long A.J."/>
            <person name="Iwai Y."/>
            <person name="Bourque K."/>
            <person name="Chernova T."/>
            <person name="Nishimura H."/>
            <person name="Fitz L.J."/>
            <person name="Malenkovich N."/>
            <person name="Okazaki T."/>
            <person name="Byrne M.C."/>
            <person name="Horton H.F."/>
            <person name="Fouser L."/>
            <person name="Carter L."/>
            <person name="Ling V."/>
            <person name="Bowman M.R."/>
            <person name="Carreno B.M."/>
            <person name="Collins M."/>
            <person name="Wood C.R."/>
            <person name="Honjo T."/>
        </authorList>
    </citation>
    <scope>FUNCTION</scope>
</reference>
<reference key="5">
    <citation type="journal article" date="2001" name="Proc. Natl. Acad. Sci. U.S.A.">
        <title>PD-1 immunoreceptor inhibits B cell receptor-mediated signaling by recruiting src homology 2-domain-containing tyrosine phosphatase 2 to phosphotyrosine.</title>
        <authorList>
            <person name="Okazaki T."/>
            <person name="Maeda A."/>
            <person name="Nishimura H."/>
            <person name="Kurosaki T."/>
            <person name="Honjo T."/>
        </authorList>
    </citation>
    <scope>FUNCTION</scope>
    <scope>PHOSPHORYLATION AT TYR-225 AND TYR-248</scope>
    <scope>MUTAGENESIS OF TYR-225 AND TYR-248</scope>
</reference>
<reference key="6">
    <citation type="journal article" date="2001" name="Science">
        <title>Autoimmune dilated cardiomyopathy in PD-1 receptor-deficient mice.</title>
        <authorList>
            <person name="Nishimura H."/>
            <person name="Okazaki T."/>
            <person name="Tanaka Y."/>
            <person name="Nakatani K."/>
            <person name="Hara M."/>
            <person name="Matsumori A."/>
            <person name="Sasayama S."/>
            <person name="Mizoguchi A."/>
            <person name="Hiai H."/>
            <person name="Minato N."/>
            <person name="Honjo T."/>
        </authorList>
    </citation>
    <scope>FUNCTION</scope>
    <scope>DISRUPTION PHENOTYPE</scope>
</reference>
<reference key="7">
    <citation type="journal article" date="2001" name="Nat. Immunol.">
        <title>PD-L2 is a second ligand for PD-1 and inhibits T cell activation.</title>
        <authorList>
            <person name="Latchman Y."/>
            <person name="Wood C.R."/>
            <person name="Chernova T."/>
            <person name="Chaudhary D."/>
            <person name="Borde M."/>
            <person name="Chernova I."/>
            <person name="Iwai Y."/>
            <person name="Long A.J."/>
            <person name="Brown J.A."/>
            <person name="Nunes R."/>
            <person name="Greenfield E.A."/>
            <person name="Bourque K."/>
            <person name="Boussiotis V.A."/>
            <person name="Carter L.L."/>
            <person name="Carreno B.M."/>
            <person name="Malenkovich N."/>
            <person name="Nishimura H."/>
            <person name="Okazaki T."/>
            <person name="Honjo T."/>
            <person name="Sharpe A.H."/>
            <person name="Freeman G.J."/>
        </authorList>
    </citation>
    <scope>FUNCTION</scope>
</reference>
<reference key="8">
    <citation type="journal article" date="2011" name="J. Exp. Med.">
        <title>PD-1 and LAG-3 inhibitory co-receptors act synergistically to prevent autoimmunity in mice.</title>
        <authorList>
            <person name="Okazaki T."/>
            <person name="Okazaki I.M."/>
            <person name="Wang J."/>
            <person name="Sugiura D."/>
            <person name="Nakaki F."/>
            <person name="Yoshida T."/>
            <person name="Kato Y."/>
            <person name="Fagarasan S."/>
            <person name="Muramatsu M."/>
            <person name="Eto T."/>
            <person name="Hioki K."/>
            <person name="Honjo T."/>
        </authorList>
    </citation>
    <scope>FUNCTION</scope>
    <scope>DISRUPTION PHENOTYPE</scope>
</reference>
<reference key="9">
    <citation type="journal article" date="2012" name="J. Exp. Med.">
        <title>Programmed cell death 1 forms negative costimulatory microclusters that directly inhibit T cell receptor signaling by recruiting phosphatase SHP2.</title>
        <authorList>
            <person name="Yokosuka T."/>
            <person name="Takamatsu M."/>
            <person name="Kobayashi-Imanishi W."/>
            <person name="Hashimoto-Tane A."/>
            <person name="Azuma M."/>
            <person name="Saito T."/>
        </authorList>
    </citation>
    <scope>FUNCTION</scope>
    <scope>SUBCELLULAR LOCATION</scope>
    <scope>PHOSPHORYLATION AT TYR-225 AND TYR-248</scope>
    <scope>MUTAGENESIS OF TYR-225 AND TYR-248</scope>
</reference>
<reference key="10">
    <citation type="journal article" date="2018" name="Nature">
        <title>FBXO38 mediates PD-1 ubiquitination and regulates anti-tumour immunity of T cells.</title>
        <authorList>
            <person name="Meng X."/>
            <person name="Liu X."/>
            <person name="Guo X."/>
            <person name="Jiang S."/>
            <person name="Chen T."/>
            <person name="Hu Z."/>
            <person name="Liu H."/>
            <person name="Bai Y."/>
            <person name="Xue M."/>
            <person name="Hu R."/>
            <person name="Sun S.C."/>
            <person name="Liu X."/>
            <person name="Zhou P."/>
            <person name="Huang X."/>
            <person name="Wei L."/>
            <person name="Yang W."/>
            <person name="Xu C."/>
        </authorList>
    </citation>
    <scope>SUBCELLULAR LOCATION</scope>
</reference>
<reference key="11">
    <citation type="journal article" date="2004" name="Immunity">
        <title>Structural and functional analysis of the costimulatory receptor programmed death-1.</title>
        <authorList>
            <person name="Zhang X."/>
            <person name="Schwartz J.C."/>
            <person name="Guo X."/>
            <person name="Bhatia S."/>
            <person name="Cao E."/>
            <person name="Lorenz M."/>
            <person name="Cammer M."/>
            <person name="Chen L."/>
            <person name="Zhang Z.-Y."/>
            <person name="Edidin M.A."/>
            <person name="Nathenson S.G."/>
            <person name="Almo S.C."/>
        </authorList>
    </citation>
    <scope>X-RAY CRYSTALLOGRAPHY (2.0 ANGSTROMS) OF 34-150</scope>
    <scope>SUBUNIT</scope>
    <scope>DISULFIDE BOND</scope>
</reference>
<reference key="12">
    <citation type="journal article" date="2008" name="Proc. Natl. Acad. Sci. U.S.A.">
        <title>The PD-1/PD-L1 complex resembles the antigen-binding Fv domains of antibodies and T cell receptors.</title>
        <authorList>
            <person name="Lin D.Y."/>
            <person name="Tanaka Y."/>
            <person name="Iwasaki M."/>
            <person name="Gittis A.G."/>
            <person name="Su H.P."/>
            <person name="Mikami B."/>
            <person name="Okazaki T."/>
            <person name="Honjo T."/>
            <person name="Minato N."/>
            <person name="Garboczi D.N."/>
        </authorList>
    </citation>
    <scope>X-RAY CRYSTALLOGRAPHY (2.65 ANGSTROMS) OF 25-157 IN COMPLEX WITH CD274</scope>
    <scope>FUNCTION</scope>
    <scope>INTERACTION WITH CD274</scope>
    <scope>DISULFIDE BOND</scope>
</reference>
<reference key="13">
    <citation type="journal article" date="2008" name="Proc. Natl. Acad. Sci. U.S.A.">
        <title>Crystal structure of the complex between programmed death-1 (PD-1) and its ligand PD-L2.</title>
        <authorList>
            <person name="Lazar-Molnar E."/>
            <person name="Yan Q."/>
            <person name="Cao E."/>
            <person name="Ramagopal U."/>
            <person name="Nathenson S.G."/>
            <person name="Almo S.C."/>
        </authorList>
    </citation>
    <scope>X-RAY CRYSTALLOGRAPHY (1.6 ANGSTROMS) OF 34-150 IN COMPLEX WITH PDCD1LG2</scope>
    <scope>FUNCTION</scope>
    <scope>INTERACTION WITH PDCD1LG2</scope>
    <scope>DISULFIDE BOND</scope>
</reference>
<accession>Q02242</accession>
<gene>
    <name evidence="19" type="primary">Pdcd1</name>
    <name evidence="18" type="synonym">Pd1</name>
</gene>
<evidence type="ECO:0000250" key="1">
    <source>
        <dbReference type="UniProtKB" id="Q15116"/>
    </source>
</evidence>
<evidence type="ECO:0000255" key="2"/>
<evidence type="ECO:0000255" key="3">
    <source>
        <dbReference type="PROSITE-ProRule" id="PRU00114"/>
    </source>
</evidence>
<evidence type="ECO:0000256" key="4">
    <source>
        <dbReference type="SAM" id="MobiDB-lite"/>
    </source>
</evidence>
<evidence type="ECO:0000269" key="5">
    <source>
    </source>
</evidence>
<evidence type="ECO:0000269" key="6">
    <source>
    </source>
</evidence>
<evidence type="ECO:0000269" key="7">
    <source>
    </source>
</evidence>
<evidence type="ECO:0000269" key="8">
    <source>
    </source>
</evidence>
<evidence type="ECO:0000269" key="9">
    <source>
    </source>
</evidence>
<evidence type="ECO:0000269" key="10">
    <source>
    </source>
</evidence>
<evidence type="ECO:0000269" key="11">
    <source>
    </source>
</evidence>
<evidence type="ECO:0000269" key="12">
    <source>
    </source>
</evidence>
<evidence type="ECO:0000269" key="13">
    <source>
    </source>
</evidence>
<evidence type="ECO:0000269" key="14">
    <source>
    </source>
</evidence>
<evidence type="ECO:0000269" key="15">
    <source>
    </source>
</evidence>
<evidence type="ECO:0000269" key="16">
    <source>
    </source>
</evidence>
<evidence type="ECO:0000269" key="17">
    <source>
    </source>
</evidence>
<evidence type="ECO:0000303" key="18">
    <source>
    </source>
</evidence>
<evidence type="ECO:0000312" key="19">
    <source>
        <dbReference type="MGI" id="MGI:104879"/>
    </source>
</evidence>
<evidence type="ECO:0007829" key="20">
    <source>
        <dbReference type="PDB" id="3BP6"/>
    </source>
</evidence>
<sequence>MWVRQVPWSFTWAVLQLSWQSGWLLEVPNGPWRSLTFYPAWLTVSEGANATFTCSLSNWSEDLMLNWNRLSPSNQTEKQAAFCNGLSQPVQDARFQIIQLPNRHDFHMNILDTRRNDSGIYLCGAISLHPKAKIEESPGAELVVTERILETSTRYPSPSPKPEGRFQGMVIGIMSALVGIPVLLLLAWALAVFCSTSMSEARGAGSKDDTLKEEPSAAPVPSVAYEELDFQGREKTPELPTACVHTEYATIVFTEGLGASAMGRRGSADGLQGPRPPRHEDGHCSWPL</sequence>
<organism>
    <name type="scientific">Mus musculus</name>
    <name type="common">Mouse</name>
    <dbReference type="NCBI Taxonomy" id="10090"/>
    <lineage>
        <taxon>Eukaryota</taxon>
        <taxon>Metazoa</taxon>
        <taxon>Chordata</taxon>
        <taxon>Craniata</taxon>
        <taxon>Vertebrata</taxon>
        <taxon>Euteleostomi</taxon>
        <taxon>Mammalia</taxon>
        <taxon>Eutheria</taxon>
        <taxon>Euarchontoglires</taxon>
        <taxon>Glires</taxon>
        <taxon>Rodentia</taxon>
        <taxon>Myomorpha</taxon>
        <taxon>Muroidea</taxon>
        <taxon>Muridae</taxon>
        <taxon>Murinae</taxon>
        <taxon>Mus</taxon>
        <taxon>Mus</taxon>
    </lineage>
</organism>
<proteinExistence type="evidence at protein level"/>